<reference key="1">
    <citation type="journal article" date="2002" name="Proc. Natl. Acad. Sci. U.S.A.">
        <title>Complete genome sequence and comparative genomic analysis of an emerging human pathogen, serotype V Streptococcus agalactiae.</title>
        <authorList>
            <person name="Tettelin H."/>
            <person name="Masignani V."/>
            <person name="Cieslewicz M.J."/>
            <person name="Eisen J.A."/>
            <person name="Peterson S.N."/>
            <person name="Wessels M.R."/>
            <person name="Paulsen I.T."/>
            <person name="Nelson K.E."/>
            <person name="Margarit I."/>
            <person name="Read T.D."/>
            <person name="Madoff L.C."/>
            <person name="Wolf A.M."/>
            <person name="Beanan M.J."/>
            <person name="Brinkac L.M."/>
            <person name="Daugherty S.C."/>
            <person name="DeBoy R.T."/>
            <person name="Durkin A.S."/>
            <person name="Kolonay J.F."/>
            <person name="Madupu R."/>
            <person name="Lewis M.R."/>
            <person name="Radune D."/>
            <person name="Fedorova N.B."/>
            <person name="Scanlan D."/>
            <person name="Khouri H.M."/>
            <person name="Mulligan S."/>
            <person name="Carty H.A."/>
            <person name="Cline R.T."/>
            <person name="Van Aken S.E."/>
            <person name="Gill J."/>
            <person name="Scarselli M."/>
            <person name="Mora M."/>
            <person name="Iacobini E.T."/>
            <person name="Brettoni C."/>
            <person name="Galli G."/>
            <person name="Mariani M."/>
            <person name="Vegni F."/>
            <person name="Maione D."/>
            <person name="Rinaudo D."/>
            <person name="Rappuoli R."/>
            <person name="Telford J.L."/>
            <person name="Kasper D.L."/>
            <person name="Grandi G."/>
            <person name="Fraser C.M."/>
        </authorList>
    </citation>
    <scope>NUCLEOTIDE SEQUENCE [LARGE SCALE GENOMIC DNA]</scope>
    <source>
        <strain>ATCC BAA-611 / 2603 V/R</strain>
    </source>
</reference>
<accession>Q8DXY3</accession>
<comment type="function">
    <text evidence="1">Binds as a heterodimer with protein bS6 to the central domain of the 16S rRNA, where it helps stabilize the platform of the 30S subunit.</text>
</comment>
<comment type="subunit">
    <text evidence="1">Part of the 30S ribosomal subunit. Forms a tight heterodimer with protein bS6.</text>
</comment>
<comment type="similarity">
    <text evidence="1">Belongs to the bacterial ribosomal protein bS18 family.</text>
</comment>
<evidence type="ECO:0000255" key="1">
    <source>
        <dbReference type="HAMAP-Rule" id="MF_00270"/>
    </source>
</evidence>
<evidence type="ECO:0000305" key="2"/>
<proteinExistence type="inferred from homology"/>
<feature type="chain" id="PRO_0000111233" description="Small ribosomal subunit protein bS18">
    <location>
        <begin position="1"/>
        <end position="79"/>
    </location>
</feature>
<keyword id="KW-1185">Reference proteome</keyword>
<keyword id="KW-0687">Ribonucleoprotein</keyword>
<keyword id="KW-0689">Ribosomal protein</keyword>
<keyword id="KW-0694">RNA-binding</keyword>
<keyword id="KW-0699">rRNA-binding</keyword>
<dbReference type="EMBL" id="AE009948">
    <property type="protein sequence ID" value="AAN00575.1"/>
    <property type="molecule type" value="Genomic_DNA"/>
</dbReference>
<dbReference type="RefSeq" id="NP_688702.1">
    <property type="nucleotide sequence ID" value="NC_004116.1"/>
</dbReference>
<dbReference type="RefSeq" id="WP_000068665.1">
    <property type="nucleotide sequence ID" value="NC_004116.1"/>
</dbReference>
<dbReference type="SMR" id="Q8DXY3"/>
<dbReference type="STRING" id="208435.SAG1712"/>
<dbReference type="GeneID" id="98393981"/>
<dbReference type="KEGG" id="sag:SAG1712"/>
<dbReference type="PATRIC" id="fig|208435.3.peg.1720"/>
<dbReference type="HOGENOM" id="CLU_148710_2_2_9"/>
<dbReference type="OrthoDB" id="9812008at2"/>
<dbReference type="PRO" id="PR:Q8DXY3"/>
<dbReference type="Proteomes" id="UP000000821">
    <property type="component" value="Chromosome"/>
</dbReference>
<dbReference type="GO" id="GO:0022627">
    <property type="term" value="C:cytosolic small ribosomal subunit"/>
    <property type="evidence" value="ECO:0007669"/>
    <property type="project" value="TreeGrafter"/>
</dbReference>
<dbReference type="GO" id="GO:0070181">
    <property type="term" value="F:small ribosomal subunit rRNA binding"/>
    <property type="evidence" value="ECO:0007669"/>
    <property type="project" value="TreeGrafter"/>
</dbReference>
<dbReference type="GO" id="GO:0003735">
    <property type="term" value="F:structural constituent of ribosome"/>
    <property type="evidence" value="ECO:0007669"/>
    <property type="project" value="InterPro"/>
</dbReference>
<dbReference type="GO" id="GO:0006412">
    <property type="term" value="P:translation"/>
    <property type="evidence" value="ECO:0007669"/>
    <property type="project" value="UniProtKB-UniRule"/>
</dbReference>
<dbReference type="FunFam" id="4.10.640.10:FF:000003">
    <property type="entry name" value="30S ribosomal protein S18"/>
    <property type="match status" value="1"/>
</dbReference>
<dbReference type="Gene3D" id="4.10.640.10">
    <property type="entry name" value="Ribosomal protein S18"/>
    <property type="match status" value="1"/>
</dbReference>
<dbReference type="HAMAP" id="MF_00270">
    <property type="entry name" value="Ribosomal_bS18"/>
    <property type="match status" value="1"/>
</dbReference>
<dbReference type="InterPro" id="IPR001648">
    <property type="entry name" value="Ribosomal_bS18"/>
</dbReference>
<dbReference type="InterPro" id="IPR018275">
    <property type="entry name" value="Ribosomal_bS18_CS"/>
</dbReference>
<dbReference type="InterPro" id="IPR036870">
    <property type="entry name" value="Ribosomal_bS18_sf"/>
</dbReference>
<dbReference type="NCBIfam" id="TIGR00165">
    <property type="entry name" value="S18"/>
    <property type="match status" value="1"/>
</dbReference>
<dbReference type="PANTHER" id="PTHR13479">
    <property type="entry name" value="30S RIBOSOMAL PROTEIN S18"/>
    <property type="match status" value="1"/>
</dbReference>
<dbReference type="PANTHER" id="PTHR13479:SF40">
    <property type="entry name" value="SMALL RIBOSOMAL SUBUNIT PROTEIN BS18M"/>
    <property type="match status" value="1"/>
</dbReference>
<dbReference type="Pfam" id="PF01084">
    <property type="entry name" value="Ribosomal_S18"/>
    <property type="match status" value="1"/>
</dbReference>
<dbReference type="PRINTS" id="PR00974">
    <property type="entry name" value="RIBOSOMALS18"/>
</dbReference>
<dbReference type="SUPFAM" id="SSF46911">
    <property type="entry name" value="Ribosomal protein S18"/>
    <property type="match status" value="1"/>
</dbReference>
<dbReference type="PROSITE" id="PS00057">
    <property type="entry name" value="RIBOSOMAL_S18"/>
    <property type="match status" value="1"/>
</dbReference>
<protein>
    <recommendedName>
        <fullName evidence="1">Small ribosomal subunit protein bS18</fullName>
    </recommendedName>
    <alternativeName>
        <fullName evidence="2">30S ribosomal protein S18</fullName>
    </alternativeName>
</protein>
<name>RS18_STRA5</name>
<organism>
    <name type="scientific">Streptococcus agalactiae serotype V (strain ATCC BAA-611 / 2603 V/R)</name>
    <dbReference type="NCBI Taxonomy" id="208435"/>
    <lineage>
        <taxon>Bacteria</taxon>
        <taxon>Bacillati</taxon>
        <taxon>Bacillota</taxon>
        <taxon>Bacilli</taxon>
        <taxon>Lactobacillales</taxon>
        <taxon>Streptococcaceae</taxon>
        <taxon>Streptococcus</taxon>
    </lineage>
</organism>
<sequence>MAQQRRGGFKRRKKVDYIAANKIEYVDYKDTELLSRFVSERGKILPRRVTGTSAKNQRKVTTAIKRARVMALMPYVNED</sequence>
<gene>
    <name evidence="1" type="primary">rpsR</name>
    <name type="ordered locus">SAG1712</name>
</gene>